<keyword id="KW-0131">Cell cycle</keyword>
<keyword id="KW-0132">Cell division</keyword>
<keyword id="KW-0133">Cell shape</keyword>
<keyword id="KW-0961">Cell wall biogenesis/degradation</keyword>
<keyword id="KW-0963">Cytoplasm</keyword>
<keyword id="KW-0326">Glycosidase</keyword>
<keyword id="KW-0378">Hydrolase</keyword>
<keyword id="KW-0573">Peptidoglycan synthesis</keyword>
<organism>
    <name type="scientific">Yersinia pseudotuberculosis serotype O:3 (strain YPIII)</name>
    <dbReference type="NCBI Taxonomy" id="502800"/>
    <lineage>
        <taxon>Bacteria</taxon>
        <taxon>Pseudomonadati</taxon>
        <taxon>Pseudomonadota</taxon>
        <taxon>Gammaproteobacteria</taxon>
        <taxon>Enterobacterales</taxon>
        <taxon>Yersiniaceae</taxon>
        <taxon>Yersinia</taxon>
    </lineage>
</organism>
<feature type="chain" id="PRO_1000121081" description="Beta-hexosaminidase">
    <location>
        <begin position="1"/>
        <end position="343"/>
    </location>
</feature>
<feature type="active site" description="Proton donor/acceptor" evidence="1">
    <location>
        <position position="176"/>
    </location>
</feature>
<feature type="active site" description="Nucleophile" evidence="1">
    <location>
        <position position="248"/>
    </location>
</feature>
<feature type="binding site" evidence="1">
    <location>
        <position position="62"/>
    </location>
    <ligand>
        <name>substrate</name>
    </ligand>
</feature>
<feature type="binding site" evidence="1">
    <location>
        <position position="70"/>
    </location>
    <ligand>
        <name>substrate</name>
    </ligand>
</feature>
<feature type="binding site" evidence="1">
    <location>
        <position position="133"/>
    </location>
    <ligand>
        <name>substrate</name>
    </ligand>
</feature>
<feature type="binding site" evidence="1">
    <location>
        <begin position="163"/>
        <end position="164"/>
    </location>
    <ligand>
        <name>substrate</name>
    </ligand>
</feature>
<feature type="site" description="Important for catalytic activity" evidence="1">
    <location>
        <position position="174"/>
    </location>
</feature>
<reference key="1">
    <citation type="submission" date="2008-02" db="EMBL/GenBank/DDBJ databases">
        <title>Complete sequence of Yersinia pseudotuberculosis YPIII.</title>
        <authorList>
            <consortium name="US DOE Joint Genome Institute"/>
            <person name="Copeland A."/>
            <person name="Lucas S."/>
            <person name="Lapidus A."/>
            <person name="Glavina del Rio T."/>
            <person name="Dalin E."/>
            <person name="Tice H."/>
            <person name="Bruce D."/>
            <person name="Goodwin L."/>
            <person name="Pitluck S."/>
            <person name="Munk A.C."/>
            <person name="Brettin T."/>
            <person name="Detter J.C."/>
            <person name="Han C."/>
            <person name="Tapia R."/>
            <person name="Schmutz J."/>
            <person name="Larimer F."/>
            <person name="Land M."/>
            <person name="Hauser L."/>
            <person name="Challacombe J.F."/>
            <person name="Green L."/>
            <person name="Lindler L.E."/>
            <person name="Nikolich M.P."/>
            <person name="Richardson P."/>
        </authorList>
    </citation>
    <scope>NUCLEOTIDE SEQUENCE [LARGE SCALE GENOMIC DNA]</scope>
    <source>
        <strain>YPIII</strain>
    </source>
</reference>
<proteinExistence type="inferred from homology"/>
<gene>
    <name evidence="1" type="primary">nagZ</name>
    <name type="ordered locus">YPK_1700</name>
</gene>
<name>NAGZ_YERPY</name>
<evidence type="ECO:0000255" key="1">
    <source>
        <dbReference type="HAMAP-Rule" id="MF_00364"/>
    </source>
</evidence>
<dbReference type="EC" id="3.2.1.52" evidence="1"/>
<dbReference type="EMBL" id="CP000950">
    <property type="protein sequence ID" value="ACA67993.1"/>
    <property type="molecule type" value="Genomic_DNA"/>
</dbReference>
<dbReference type="SMR" id="B1JI47"/>
<dbReference type="CAZy" id="GH3">
    <property type="family name" value="Glycoside Hydrolase Family 3"/>
</dbReference>
<dbReference type="KEGG" id="ypy:YPK_1700"/>
<dbReference type="PATRIC" id="fig|502800.11.peg.2362"/>
<dbReference type="UniPathway" id="UPA00544"/>
<dbReference type="GO" id="GO:0005737">
    <property type="term" value="C:cytoplasm"/>
    <property type="evidence" value="ECO:0007669"/>
    <property type="project" value="UniProtKB-SubCell"/>
</dbReference>
<dbReference type="GO" id="GO:0004563">
    <property type="term" value="F:beta-N-acetylhexosaminidase activity"/>
    <property type="evidence" value="ECO:0007669"/>
    <property type="project" value="UniProtKB-UniRule"/>
</dbReference>
<dbReference type="GO" id="GO:0005975">
    <property type="term" value="P:carbohydrate metabolic process"/>
    <property type="evidence" value="ECO:0007669"/>
    <property type="project" value="InterPro"/>
</dbReference>
<dbReference type="GO" id="GO:0051301">
    <property type="term" value="P:cell division"/>
    <property type="evidence" value="ECO:0007669"/>
    <property type="project" value="UniProtKB-KW"/>
</dbReference>
<dbReference type="GO" id="GO:0071555">
    <property type="term" value="P:cell wall organization"/>
    <property type="evidence" value="ECO:0007669"/>
    <property type="project" value="UniProtKB-KW"/>
</dbReference>
<dbReference type="GO" id="GO:0009252">
    <property type="term" value="P:peptidoglycan biosynthetic process"/>
    <property type="evidence" value="ECO:0007669"/>
    <property type="project" value="UniProtKB-KW"/>
</dbReference>
<dbReference type="GO" id="GO:0009254">
    <property type="term" value="P:peptidoglycan turnover"/>
    <property type="evidence" value="ECO:0007669"/>
    <property type="project" value="UniProtKB-UniRule"/>
</dbReference>
<dbReference type="GO" id="GO:0008360">
    <property type="term" value="P:regulation of cell shape"/>
    <property type="evidence" value="ECO:0007669"/>
    <property type="project" value="UniProtKB-KW"/>
</dbReference>
<dbReference type="FunFam" id="3.20.20.300:FF:000001">
    <property type="entry name" value="Beta-hexosaminidase"/>
    <property type="match status" value="1"/>
</dbReference>
<dbReference type="Gene3D" id="3.20.20.300">
    <property type="entry name" value="Glycoside hydrolase, family 3, N-terminal domain"/>
    <property type="match status" value="1"/>
</dbReference>
<dbReference type="HAMAP" id="MF_00364">
    <property type="entry name" value="NagZ"/>
    <property type="match status" value="1"/>
</dbReference>
<dbReference type="InterPro" id="IPR022956">
    <property type="entry name" value="Beta_hexosaminidase_bac"/>
</dbReference>
<dbReference type="InterPro" id="IPR019800">
    <property type="entry name" value="Glyco_hydro_3_AS"/>
</dbReference>
<dbReference type="InterPro" id="IPR001764">
    <property type="entry name" value="Glyco_hydro_3_N"/>
</dbReference>
<dbReference type="InterPro" id="IPR036962">
    <property type="entry name" value="Glyco_hydro_3_N_sf"/>
</dbReference>
<dbReference type="InterPro" id="IPR017853">
    <property type="entry name" value="Glycoside_hydrolase_SF"/>
</dbReference>
<dbReference type="InterPro" id="IPR050226">
    <property type="entry name" value="NagZ_Beta-hexosaminidase"/>
</dbReference>
<dbReference type="NCBIfam" id="NF003740">
    <property type="entry name" value="PRK05337.1"/>
    <property type="match status" value="1"/>
</dbReference>
<dbReference type="PANTHER" id="PTHR30480:SF13">
    <property type="entry name" value="BETA-HEXOSAMINIDASE"/>
    <property type="match status" value="1"/>
</dbReference>
<dbReference type="PANTHER" id="PTHR30480">
    <property type="entry name" value="BETA-HEXOSAMINIDASE-RELATED"/>
    <property type="match status" value="1"/>
</dbReference>
<dbReference type="Pfam" id="PF00933">
    <property type="entry name" value="Glyco_hydro_3"/>
    <property type="match status" value="1"/>
</dbReference>
<dbReference type="SUPFAM" id="SSF51445">
    <property type="entry name" value="(Trans)glycosidases"/>
    <property type="match status" value="1"/>
</dbReference>
<dbReference type="PROSITE" id="PS00775">
    <property type="entry name" value="GLYCOSYL_HYDROL_F3"/>
    <property type="match status" value="1"/>
</dbReference>
<comment type="function">
    <text evidence="1">Plays a role in peptidoglycan recycling by cleaving the terminal beta-1,4-linked N-acetylglucosamine (GlcNAc) from peptide-linked peptidoglycan fragments, giving rise to free GlcNAc, anhydro-N-acetylmuramic acid and anhydro-N-acetylmuramic acid-linked peptides.</text>
</comment>
<comment type="catalytic activity">
    <reaction evidence="1">
        <text>Hydrolysis of terminal non-reducing N-acetyl-D-hexosamine residues in N-acetyl-beta-D-hexosaminides.</text>
        <dbReference type="EC" id="3.2.1.52"/>
    </reaction>
</comment>
<comment type="pathway">
    <text evidence="1">Cell wall biogenesis; peptidoglycan recycling.</text>
</comment>
<comment type="subcellular location">
    <subcellularLocation>
        <location evidence="1">Cytoplasm</location>
    </subcellularLocation>
</comment>
<comment type="similarity">
    <text evidence="1">Belongs to the glycosyl hydrolase 3 family. NagZ subfamily.</text>
</comment>
<accession>B1JI47</accession>
<protein>
    <recommendedName>
        <fullName evidence="1">Beta-hexosaminidase</fullName>
        <ecNumber evidence="1">3.2.1.52</ecNumber>
    </recommendedName>
    <alternativeName>
        <fullName evidence="1">Beta-N-acetylhexosaminidase</fullName>
    </alternativeName>
    <alternativeName>
        <fullName evidence="1">N-acetyl-beta-glucosaminidase</fullName>
    </alternativeName>
</protein>
<sequence>MGPVMLDVASYELDAEEREILKHPLVGGLILFSRNFHDAEQLRELVRQIRAASHERLVVAVDQEGGRVQRFRDGFTRLPAAQSFAAINDAATAAQLAQEAGWLMAAEMMAMDIDISFAPVLDIGHVSAAIGERSFHSDPQQARIMAECFIRGMHSAGMKTTGKHFPGHGAVTADSHKETPHDNRPLAEIRTHDMVIFRELIQRKLLDAIMPAHVIYTEADARPASGSAYWLQEILRQELGFEGIIFSDDLSMEGAAIMGSYAERGQASLDAGCDMILVCNNRQGAVSVLDNLSPIKADQLTRLYHSGQFDRQTLMASSRWQQANKALTALSERWDAHKQTLGQ</sequence>